<dbReference type="EC" id="2.7.1.11" evidence="1"/>
<dbReference type="EMBL" id="CP000886">
    <property type="protein sequence ID" value="ABX70325.1"/>
    <property type="molecule type" value="Genomic_DNA"/>
</dbReference>
<dbReference type="RefSeq" id="WP_000591793.1">
    <property type="nucleotide sequence ID" value="NC_010102.1"/>
</dbReference>
<dbReference type="SMR" id="A9MZE7"/>
<dbReference type="GeneID" id="66758327"/>
<dbReference type="KEGG" id="spq:SPAB_05034"/>
<dbReference type="PATRIC" id="fig|1016998.12.peg.4725"/>
<dbReference type="HOGENOM" id="CLU_020655_0_1_6"/>
<dbReference type="BioCyc" id="SENT1016998:SPAB_RS20485-MONOMER"/>
<dbReference type="UniPathway" id="UPA00109">
    <property type="reaction ID" value="UER00182"/>
</dbReference>
<dbReference type="Proteomes" id="UP000008556">
    <property type="component" value="Chromosome"/>
</dbReference>
<dbReference type="GO" id="GO:0005945">
    <property type="term" value="C:6-phosphofructokinase complex"/>
    <property type="evidence" value="ECO:0007669"/>
    <property type="project" value="TreeGrafter"/>
</dbReference>
<dbReference type="GO" id="GO:0003872">
    <property type="term" value="F:6-phosphofructokinase activity"/>
    <property type="evidence" value="ECO:0007669"/>
    <property type="project" value="UniProtKB-UniRule"/>
</dbReference>
<dbReference type="GO" id="GO:0016208">
    <property type="term" value="F:AMP binding"/>
    <property type="evidence" value="ECO:0007669"/>
    <property type="project" value="TreeGrafter"/>
</dbReference>
<dbReference type="GO" id="GO:0005524">
    <property type="term" value="F:ATP binding"/>
    <property type="evidence" value="ECO:0007669"/>
    <property type="project" value="UniProtKB-KW"/>
</dbReference>
<dbReference type="GO" id="GO:0070095">
    <property type="term" value="F:fructose-6-phosphate binding"/>
    <property type="evidence" value="ECO:0007669"/>
    <property type="project" value="TreeGrafter"/>
</dbReference>
<dbReference type="GO" id="GO:0042802">
    <property type="term" value="F:identical protein binding"/>
    <property type="evidence" value="ECO:0007669"/>
    <property type="project" value="TreeGrafter"/>
</dbReference>
<dbReference type="GO" id="GO:0046872">
    <property type="term" value="F:metal ion binding"/>
    <property type="evidence" value="ECO:0007669"/>
    <property type="project" value="UniProtKB-KW"/>
</dbReference>
<dbReference type="GO" id="GO:0048029">
    <property type="term" value="F:monosaccharide binding"/>
    <property type="evidence" value="ECO:0007669"/>
    <property type="project" value="TreeGrafter"/>
</dbReference>
<dbReference type="GO" id="GO:0061621">
    <property type="term" value="P:canonical glycolysis"/>
    <property type="evidence" value="ECO:0007669"/>
    <property type="project" value="TreeGrafter"/>
</dbReference>
<dbReference type="GO" id="GO:0030388">
    <property type="term" value="P:fructose 1,6-bisphosphate metabolic process"/>
    <property type="evidence" value="ECO:0007669"/>
    <property type="project" value="TreeGrafter"/>
</dbReference>
<dbReference type="GO" id="GO:0006002">
    <property type="term" value="P:fructose 6-phosphate metabolic process"/>
    <property type="evidence" value="ECO:0007669"/>
    <property type="project" value="InterPro"/>
</dbReference>
<dbReference type="CDD" id="cd00763">
    <property type="entry name" value="Bacterial_PFK"/>
    <property type="match status" value="1"/>
</dbReference>
<dbReference type="FunFam" id="3.40.50.450:FF:000001">
    <property type="entry name" value="ATP-dependent 6-phosphofructokinase"/>
    <property type="match status" value="1"/>
</dbReference>
<dbReference type="FunFam" id="3.40.50.460:FF:000002">
    <property type="entry name" value="ATP-dependent 6-phosphofructokinase"/>
    <property type="match status" value="1"/>
</dbReference>
<dbReference type="Gene3D" id="3.40.50.450">
    <property type="match status" value="1"/>
</dbReference>
<dbReference type="Gene3D" id="3.40.50.460">
    <property type="entry name" value="Phosphofructokinase domain"/>
    <property type="match status" value="1"/>
</dbReference>
<dbReference type="HAMAP" id="MF_00339">
    <property type="entry name" value="Phosphofructokinase_I_B1"/>
    <property type="match status" value="1"/>
</dbReference>
<dbReference type="InterPro" id="IPR022953">
    <property type="entry name" value="ATP_PFK"/>
</dbReference>
<dbReference type="InterPro" id="IPR012003">
    <property type="entry name" value="ATP_PFK_prok-type"/>
</dbReference>
<dbReference type="InterPro" id="IPR012828">
    <property type="entry name" value="PFKA_ATP_prok"/>
</dbReference>
<dbReference type="InterPro" id="IPR015912">
    <property type="entry name" value="Phosphofructokinase_CS"/>
</dbReference>
<dbReference type="InterPro" id="IPR000023">
    <property type="entry name" value="Phosphofructokinase_dom"/>
</dbReference>
<dbReference type="InterPro" id="IPR035966">
    <property type="entry name" value="PKF_sf"/>
</dbReference>
<dbReference type="NCBIfam" id="TIGR02482">
    <property type="entry name" value="PFKA_ATP"/>
    <property type="match status" value="1"/>
</dbReference>
<dbReference type="NCBIfam" id="NF002872">
    <property type="entry name" value="PRK03202.1"/>
    <property type="match status" value="1"/>
</dbReference>
<dbReference type="PANTHER" id="PTHR13697:SF4">
    <property type="entry name" value="ATP-DEPENDENT 6-PHOSPHOFRUCTOKINASE"/>
    <property type="match status" value="1"/>
</dbReference>
<dbReference type="PANTHER" id="PTHR13697">
    <property type="entry name" value="PHOSPHOFRUCTOKINASE"/>
    <property type="match status" value="1"/>
</dbReference>
<dbReference type="Pfam" id="PF00365">
    <property type="entry name" value="PFK"/>
    <property type="match status" value="1"/>
</dbReference>
<dbReference type="PIRSF" id="PIRSF000532">
    <property type="entry name" value="ATP_PFK_prok"/>
    <property type="match status" value="1"/>
</dbReference>
<dbReference type="PRINTS" id="PR00476">
    <property type="entry name" value="PHFRCTKINASE"/>
</dbReference>
<dbReference type="SUPFAM" id="SSF53784">
    <property type="entry name" value="Phosphofructokinase"/>
    <property type="match status" value="1"/>
</dbReference>
<dbReference type="PROSITE" id="PS00433">
    <property type="entry name" value="PHOSPHOFRUCTOKINASE"/>
    <property type="match status" value="1"/>
</dbReference>
<feature type="chain" id="PRO_1000079312" description="ATP-dependent 6-phosphofructokinase">
    <location>
        <begin position="1"/>
        <end position="320"/>
    </location>
</feature>
<feature type="active site" description="Proton acceptor" evidence="1">
    <location>
        <position position="128"/>
    </location>
</feature>
<feature type="binding site" evidence="1">
    <location>
        <position position="12"/>
    </location>
    <ligand>
        <name>ATP</name>
        <dbReference type="ChEBI" id="CHEBI:30616"/>
    </ligand>
</feature>
<feature type="binding site" evidence="1">
    <location>
        <begin position="22"/>
        <end position="26"/>
    </location>
    <ligand>
        <name>ADP</name>
        <dbReference type="ChEBI" id="CHEBI:456216"/>
        <note>allosteric activator; ligand shared between dimeric partners</note>
    </ligand>
</feature>
<feature type="binding site" evidence="1">
    <location>
        <begin position="55"/>
        <end position="60"/>
    </location>
    <ligand>
        <name>ADP</name>
        <dbReference type="ChEBI" id="CHEBI:456216"/>
        <note>allosteric activator; ligand shared between dimeric partners</note>
    </ligand>
</feature>
<feature type="binding site" evidence="1">
    <location>
        <begin position="73"/>
        <end position="74"/>
    </location>
    <ligand>
        <name>ATP</name>
        <dbReference type="ChEBI" id="CHEBI:30616"/>
    </ligand>
</feature>
<feature type="binding site" evidence="1">
    <location>
        <begin position="103"/>
        <end position="106"/>
    </location>
    <ligand>
        <name>ATP</name>
        <dbReference type="ChEBI" id="CHEBI:30616"/>
    </ligand>
</feature>
<feature type="binding site" evidence="1">
    <location>
        <position position="104"/>
    </location>
    <ligand>
        <name>Mg(2+)</name>
        <dbReference type="ChEBI" id="CHEBI:18420"/>
        <note>catalytic</note>
    </ligand>
</feature>
<feature type="binding site" description="in other chain" evidence="1">
    <location>
        <begin position="126"/>
        <end position="128"/>
    </location>
    <ligand>
        <name>substrate</name>
        <note>ligand shared between dimeric partners</note>
    </ligand>
</feature>
<feature type="binding site" description="in other chain" evidence="1">
    <location>
        <position position="155"/>
    </location>
    <ligand>
        <name>ADP</name>
        <dbReference type="ChEBI" id="CHEBI:456216"/>
        <note>allosteric activator; ligand shared between dimeric partners</note>
    </ligand>
</feature>
<feature type="binding site" evidence="1">
    <location>
        <position position="163"/>
    </location>
    <ligand>
        <name>substrate</name>
        <note>ligand shared between dimeric partners</note>
    </ligand>
</feature>
<feature type="binding site" description="in other chain" evidence="1">
    <location>
        <begin position="170"/>
        <end position="172"/>
    </location>
    <ligand>
        <name>substrate</name>
        <note>ligand shared between dimeric partners</note>
    </ligand>
</feature>
<feature type="binding site" description="in other chain" evidence="1">
    <location>
        <begin position="186"/>
        <end position="188"/>
    </location>
    <ligand>
        <name>ADP</name>
        <dbReference type="ChEBI" id="CHEBI:456216"/>
        <note>allosteric activator; ligand shared between dimeric partners</note>
    </ligand>
</feature>
<feature type="binding site" description="in other chain" evidence="1">
    <location>
        <position position="212"/>
    </location>
    <ligand>
        <name>ADP</name>
        <dbReference type="ChEBI" id="CHEBI:456216"/>
        <note>allosteric activator; ligand shared between dimeric partners</note>
    </ligand>
</feature>
<feature type="binding site" description="in other chain" evidence="1">
    <location>
        <begin position="214"/>
        <end position="216"/>
    </location>
    <ligand>
        <name>ADP</name>
        <dbReference type="ChEBI" id="CHEBI:456216"/>
        <note>allosteric activator; ligand shared between dimeric partners</note>
    </ligand>
</feature>
<feature type="binding site" description="in other chain" evidence="1">
    <location>
        <position position="223"/>
    </location>
    <ligand>
        <name>substrate</name>
        <note>ligand shared between dimeric partners</note>
    </ligand>
</feature>
<feature type="binding site" evidence="1">
    <location>
        <position position="244"/>
    </location>
    <ligand>
        <name>substrate</name>
        <note>ligand shared between dimeric partners</note>
    </ligand>
</feature>
<feature type="binding site" description="in other chain" evidence="1">
    <location>
        <begin position="250"/>
        <end position="253"/>
    </location>
    <ligand>
        <name>substrate</name>
        <note>ligand shared between dimeric partners</note>
    </ligand>
</feature>
<organism>
    <name type="scientific">Salmonella paratyphi B (strain ATCC BAA-1250 / SPB7)</name>
    <dbReference type="NCBI Taxonomy" id="1016998"/>
    <lineage>
        <taxon>Bacteria</taxon>
        <taxon>Pseudomonadati</taxon>
        <taxon>Pseudomonadota</taxon>
        <taxon>Gammaproteobacteria</taxon>
        <taxon>Enterobacterales</taxon>
        <taxon>Enterobacteriaceae</taxon>
        <taxon>Salmonella</taxon>
    </lineage>
</organism>
<evidence type="ECO:0000255" key="1">
    <source>
        <dbReference type="HAMAP-Rule" id="MF_00339"/>
    </source>
</evidence>
<name>PFKA_SALPB</name>
<proteinExistence type="inferred from homology"/>
<protein>
    <recommendedName>
        <fullName evidence="1">ATP-dependent 6-phosphofructokinase</fullName>
        <shortName evidence="1">ATP-PFK</shortName>
        <shortName evidence="1">Phosphofructokinase</shortName>
        <ecNumber evidence="1">2.7.1.11</ecNumber>
    </recommendedName>
    <alternativeName>
        <fullName evidence="1">Phosphohexokinase</fullName>
    </alternativeName>
</protein>
<sequence>MIKKIGVLTSGGDAPGMNAAIRGVVRAALTEGLEVMGIYDGYLGLYEDRMVQLDRYSVSDMINRGGTFLGSARFPEFRDENIRAVAIENLKKRGIDALVVIGGDGSYMGAKRLTEMGFPCIGLPGTIDNDIKGTDYTIGYFTALGTVVEAIDRLRDTSSSHQRISIVEVMGRYCGDLTLAAAIAGGCEFIVVPEVEFNREDLVAEIKAGIAKGKKHAIVAITEHMCDVDELAHFIEKETGRETRATVLGHIQRGGSPVPYDRILASRMGAYAIDLLLEGHGGRCVGIQNEQLVHHDIIDAIENMKRPFKSDWMECAKKLY</sequence>
<comment type="function">
    <text evidence="1">Catalyzes the phosphorylation of D-fructose 6-phosphate to fructose 1,6-bisphosphate by ATP, the first committing step of glycolysis.</text>
</comment>
<comment type="catalytic activity">
    <reaction evidence="1">
        <text>beta-D-fructose 6-phosphate + ATP = beta-D-fructose 1,6-bisphosphate + ADP + H(+)</text>
        <dbReference type="Rhea" id="RHEA:16109"/>
        <dbReference type="ChEBI" id="CHEBI:15378"/>
        <dbReference type="ChEBI" id="CHEBI:30616"/>
        <dbReference type="ChEBI" id="CHEBI:32966"/>
        <dbReference type="ChEBI" id="CHEBI:57634"/>
        <dbReference type="ChEBI" id="CHEBI:456216"/>
        <dbReference type="EC" id="2.7.1.11"/>
    </reaction>
</comment>
<comment type="cofactor">
    <cofactor evidence="1">
        <name>Mg(2+)</name>
        <dbReference type="ChEBI" id="CHEBI:18420"/>
    </cofactor>
</comment>
<comment type="activity regulation">
    <text evidence="1">Allosterically activated by ADP and other diphosphonucleosides, and allosterically inhibited by phosphoenolpyruvate.</text>
</comment>
<comment type="pathway">
    <text evidence="1">Carbohydrate degradation; glycolysis; D-glyceraldehyde 3-phosphate and glycerone phosphate from D-glucose: step 3/4.</text>
</comment>
<comment type="subunit">
    <text evidence="1">Homotetramer.</text>
</comment>
<comment type="subcellular location">
    <subcellularLocation>
        <location evidence="1">Cytoplasm</location>
    </subcellularLocation>
</comment>
<comment type="similarity">
    <text evidence="1">Belongs to the phosphofructokinase type A (PFKA) family. ATP-dependent PFK group I subfamily. Prokaryotic clade 'B1' sub-subfamily.</text>
</comment>
<keyword id="KW-0021">Allosteric enzyme</keyword>
<keyword id="KW-0067">ATP-binding</keyword>
<keyword id="KW-0963">Cytoplasm</keyword>
<keyword id="KW-0324">Glycolysis</keyword>
<keyword id="KW-0418">Kinase</keyword>
<keyword id="KW-0460">Magnesium</keyword>
<keyword id="KW-0479">Metal-binding</keyword>
<keyword id="KW-0547">Nucleotide-binding</keyword>
<keyword id="KW-0808">Transferase</keyword>
<gene>
    <name evidence="1" type="primary">pfkA</name>
    <name type="ordered locus">SPAB_05034</name>
</gene>
<reference key="1">
    <citation type="submission" date="2007-11" db="EMBL/GenBank/DDBJ databases">
        <authorList>
            <consortium name="The Salmonella enterica serovar Paratyphi B Genome Sequencing Project"/>
            <person name="McClelland M."/>
            <person name="Sanderson E.K."/>
            <person name="Porwollik S."/>
            <person name="Spieth J."/>
            <person name="Clifton W.S."/>
            <person name="Fulton R."/>
            <person name="Cordes M."/>
            <person name="Wollam A."/>
            <person name="Shah N."/>
            <person name="Pepin K."/>
            <person name="Bhonagiri V."/>
            <person name="Nash W."/>
            <person name="Johnson M."/>
            <person name="Thiruvilangam P."/>
            <person name="Wilson R."/>
        </authorList>
    </citation>
    <scope>NUCLEOTIDE SEQUENCE [LARGE SCALE GENOMIC DNA]</scope>
    <source>
        <strain>ATCC BAA-1250 / SPB7</strain>
    </source>
</reference>
<accession>A9MZE7</accession>